<sequence>MSRKRSKMSSSGTISNYYVDGVMAQEPEDVYAPRLIQASHTVTPRPSGAGDNADFSSCNFAPKPGVFSSSWSSVHPQGIYHPYVHHHHQPHLSATDGRYVGVRPWMEPISNHVSFAGFHPSNTRPYGAKPDVLPAKVPECDTLEPEARPVPAEFSCGGALGAEKVTKEQRRASEISSHGEPKDEKQQLDPNNPAANWIHARSTRKKRCPYTKYQTLELEKEFLYNMYLTRDRRFEVARILSLTERQVKIWFQNRRMKMKKMNREKGGKDQL</sequence>
<feature type="chain" id="PRO_0000200225" description="Homeobox protein Hox-D9">
    <location>
        <begin position="1"/>
        <end position="271"/>
    </location>
</feature>
<feature type="DNA-binding region" description="Homeobox" evidence="2">
    <location>
        <begin position="203"/>
        <end position="262"/>
    </location>
</feature>
<feature type="region of interest" description="Disordered" evidence="3">
    <location>
        <begin position="161"/>
        <end position="195"/>
    </location>
</feature>
<feature type="compositionally biased region" description="Basic and acidic residues" evidence="3">
    <location>
        <begin position="164"/>
        <end position="187"/>
    </location>
</feature>
<protein>
    <recommendedName>
        <fullName>Homeobox protein Hox-D9</fullName>
    </recommendedName>
</protein>
<name>HXD9_ORYLA</name>
<accession>Q9PVR2</accession>
<organism>
    <name type="scientific">Oryzias latipes</name>
    <name type="common">Japanese rice fish</name>
    <name type="synonym">Japanese killifish</name>
    <dbReference type="NCBI Taxonomy" id="8090"/>
    <lineage>
        <taxon>Eukaryota</taxon>
        <taxon>Metazoa</taxon>
        <taxon>Chordata</taxon>
        <taxon>Craniata</taxon>
        <taxon>Vertebrata</taxon>
        <taxon>Euteleostomi</taxon>
        <taxon>Actinopterygii</taxon>
        <taxon>Neopterygii</taxon>
        <taxon>Teleostei</taxon>
        <taxon>Neoteleostei</taxon>
        <taxon>Acanthomorphata</taxon>
        <taxon>Ovalentaria</taxon>
        <taxon>Atherinomorphae</taxon>
        <taxon>Beloniformes</taxon>
        <taxon>Adrianichthyidae</taxon>
        <taxon>Oryziinae</taxon>
        <taxon>Oryzias</taxon>
    </lineage>
</organism>
<keyword id="KW-0217">Developmental protein</keyword>
<keyword id="KW-0238">DNA-binding</keyword>
<keyword id="KW-0371">Homeobox</keyword>
<keyword id="KW-0539">Nucleus</keyword>
<keyword id="KW-1185">Reference proteome</keyword>
<keyword id="KW-0804">Transcription</keyword>
<keyword id="KW-0805">Transcription regulation</keyword>
<gene>
    <name type="primary">hoxd9</name>
    <name type="synonym">hoxd9a</name>
</gene>
<comment type="function">
    <text evidence="1">Sequence-specific transcription factor which is part of a developmental regulatory system that provides cells with specific positional identities on the anterior-posterior axis.</text>
</comment>
<comment type="subcellular location">
    <subcellularLocation>
        <location evidence="2">Nucleus</location>
    </subcellularLocation>
</comment>
<comment type="similarity">
    <text evidence="4">Belongs to the Abd-B homeobox family.</text>
</comment>
<dbReference type="EMBL" id="AB026967">
    <property type="protein sequence ID" value="BAA86250.1"/>
    <property type="molecule type" value="mRNA"/>
</dbReference>
<dbReference type="RefSeq" id="NP_001188420.1">
    <property type="nucleotide sequence ID" value="NM_001201491.1"/>
</dbReference>
<dbReference type="SMR" id="Q9PVR2"/>
<dbReference type="GeneID" id="100529156"/>
<dbReference type="KEGG" id="ola:100529156"/>
<dbReference type="CTD" id="30350"/>
<dbReference type="eggNOG" id="KOG0487">
    <property type="taxonomic scope" value="Eukaryota"/>
</dbReference>
<dbReference type="InParanoid" id="Q9PVR2"/>
<dbReference type="OrthoDB" id="6159439at2759"/>
<dbReference type="Proteomes" id="UP000001038">
    <property type="component" value="Unplaced"/>
</dbReference>
<dbReference type="Proteomes" id="UP000265180">
    <property type="component" value="Chromosome 9"/>
</dbReference>
<dbReference type="Proteomes" id="UP000265200">
    <property type="component" value="Chromosome 9"/>
</dbReference>
<dbReference type="GO" id="GO:0005634">
    <property type="term" value="C:nucleus"/>
    <property type="evidence" value="ECO:0000318"/>
    <property type="project" value="GO_Central"/>
</dbReference>
<dbReference type="GO" id="GO:0003700">
    <property type="term" value="F:DNA-binding transcription factor activity"/>
    <property type="evidence" value="ECO:0000318"/>
    <property type="project" value="GO_Central"/>
</dbReference>
<dbReference type="GO" id="GO:0000981">
    <property type="term" value="F:DNA-binding transcription factor activity, RNA polymerase II-specific"/>
    <property type="evidence" value="ECO:0007669"/>
    <property type="project" value="InterPro"/>
</dbReference>
<dbReference type="GO" id="GO:0000978">
    <property type="term" value="F:RNA polymerase II cis-regulatory region sequence-specific DNA binding"/>
    <property type="evidence" value="ECO:0000318"/>
    <property type="project" value="GO_Central"/>
</dbReference>
<dbReference type="GO" id="GO:0009952">
    <property type="term" value="P:anterior/posterior pattern specification"/>
    <property type="evidence" value="ECO:0000318"/>
    <property type="project" value="GO_Central"/>
</dbReference>
<dbReference type="GO" id="GO:0006351">
    <property type="term" value="P:DNA-templated transcription"/>
    <property type="evidence" value="ECO:0007669"/>
    <property type="project" value="InterPro"/>
</dbReference>
<dbReference type="GO" id="GO:0048704">
    <property type="term" value="P:embryonic skeletal system morphogenesis"/>
    <property type="evidence" value="ECO:0000318"/>
    <property type="project" value="GO_Central"/>
</dbReference>
<dbReference type="GO" id="GO:0009954">
    <property type="term" value="P:proximal/distal pattern formation"/>
    <property type="evidence" value="ECO:0000318"/>
    <property type="project" value="GO_Central"/>
</dbReference>
<dbReference type="GO" id="GO:0006357">
    <property type="term" value="P:regulation of transcription by RNA polymerase II"/>
    <property type="evidence" value="ECO:0000318"/>
    <property type="project" value="GO_Central"/>
</dbReference>
<dbReference type="CDD" id="cd00086">
    <property type="entry name" value="homeodomain"/>
    <property type="match status" value="1"/>
</dbReference>
<dbReference type="FunFam" id="1.10.10.60:FF:000018">
    <property type="entry name" value="Homeobox A10"/>
    <property type="match status" value="1"/>
</dbReference>
<dbReference type="Gene3D" id="1.10.10.60">
    <property type="entry name" value="Homeodomain-like"/>
    <property type="match status" value="1"/>
</dbReference>
<dbReference type="InterPro" id="IPR050803">
    <property type="entry name" value="Abd-B_homeobox_TF"/>
</dbReference>
<dbReference type="InterPro" id="IPR001356">
    <property type="entry name" value="HD"/>
</dbReference>
<dbReference type="InterPro" id="IPR020479">
    <property type="entry name" value="HD_metazoa"/>
</dbReference>
<dbReference type="InterPro" id="IPR017970">
    <property type="entry name" value="Homeobox_CS"/>
</dbReference>
<dbReference type="InterPro" id="IPR009057">
    <property type="entry name" value="Homeodomain-like_sf"/>
</dbReference>
<dbReference type="InterPro" id="IPR006711">
    <property type="entry name" value="Hox9_activation_N"/>
</dbReference>
<dbReference type="InterPro" id="IPR017112">
    <property type="entry name" value="HXA9/HXB9/HXC9"/>
</dbReference>
<dbReference type="PANTHER" id="PTHR45970">
    <property type="entry name" value="AGAP004664-PA"/>
    <property type="match status" value="1"/>
</dbReference>
<dbReference type="PANTHER" id="PTHR45970:SF4">
    <property type="entry name" value="HOMEOBOX PROTEIN HOX-D9"/>
    <property type="match status" value="1"/>
</dbReference>
<dbReference type="Pfam" id="PF00046">
    <property type="entry name" value="Homeodomain"/>
    <property type="match status" value="1"/>
</dbReference>
<dbReference type="Pfam" id="PF04617">
    <property type="entry name" value="Hox9_act"/>
    <property type="match status" value="1"/>
</dbReference>
<dbReference type="PIRSF" id="PIRSF037109">
    <property type="entry name" value="Homeobox_Hox9"/>
    <property type="match status" value="1"/>
</dbReference>
<dbReference type="PRINTS" id="PR00024">
    <property type="entry name" value="HOMEOBOX"/>
</dbReference>
<dbReference type="SMART" id="SM00389">
    <property type="entry name" value="HOX"/>
    <property type="match status" value="1"/>
</dbReference>
<dbReference type="SUPFAM" id="SSF46689">
    <property type="entry name" value="Homeodomain-like"/>
    <property type="match status" value="1"/>
</dbReference>
<dbReference type="PROSITE" id="PS00027">
    <property type="entry name" value="HOMEOBOX_1"/>
    <property type="match status" value="1"/>
</dbReference>
<dbReference type="PROSITE" id="PS50071">
    <property type="entry name" value="HOMEOBOX_2"/>
    <property type="match status" value="1"/>
</dbReference>
<evidence type="ECO:0000250" key="1"/>
<evidence type="ECO:0000255" key="2">
    <source>
        <dbReference type="PROSITE-ProRule" id="PRU00108"/>
    </source>
</evidence>
<evidence type="ECO:0000256" key="3">
    <source>
        <dbReference type="SAM" id="MobiDB-lite"/>
    </source>
</evidence>
<evidence type="ECO:0000305" key="4"/>
<proteinExistence type="evidence at transcript level"/>
<reference key="1">
    <citation type="submission" date="1999-05" db="EMBL/GenBank/DDBJ databases">
        <title>Hox genes of the medakafish Oryzias latipes.</title>
        <authorList>
            <person name="Kondo S."/>
            <person name="Naruse K."/>
            <person name="Shima A."/>
        </authorList>
    </citation>
    <scope>NUCLEOTIDE SEQUENCE [MRNA]</scope>
</reference>